<organism>
    <name type="scientific">Geobacillus kaustophilus (strain HTA426)</name>
    <dbReference type="NCBI Taxonomy" id="235909"/>
    <lineage>
        <taxon>Bacteria</taxon>
        <taxon>Bacillati</taxon>
        <taxon>Bacillota</taxon>
        <taxon>Bacilli</taxon>
        <taxon>Bacillales</taxon>
        <taxon>Anoxybacillaceae</taxon>
        <taxon>Geobacillus</taxon>
        <taxon>Geobacillus thermoleovorans group</taxon>
    </lineage>
</organism>
<gene>
    <name evidence="1" type="primary">pdxS</name>
    <name type="ordered locus">GK0011</name>
</gene>
<sequence length="294" mass="31652">MALTGTDRVKRGMAEMQKGGVIMDVVNAEQAKIAEAAGAVAVMALERVPADIRAAGGVARMADPTVIEEVMNAVSIPVMAKVRIGHYVEARVLEALGVDYIDESEVLTPADEEFHIDKRQFTVPFVCGCRDLGEAARRIAEGASMLRTKGEPGTGNIVEAVRHMRKVNAQIRKVVNMSEDELVAEAKQLGAPVEVLREIKRLGRLPVVNFAAGGVATPADAALMMHLGADGVFVGSGIFKSENPEKYARAIVEATTHYEDYELIAHLSKGLGGAMRGIDIATLLPEHRMQERGW</sequence>
<comment type="function">
    <text evidence="1">Catalyzes the formation of pyridoxal 5'-phosphate from ribose 5-phosphate (RBP), glyceraldehyde 3-phosphate (G3P) and ammonia. The ammonia is provided by the PdxT subunit. Can also use ribulose 5-phosphate and dihydroxyacetone phosphate as substrates, resulting from enzyme-catalyzed isomerization of RBP and G3P, respectively.</text>
</comment>
<comment type="catalytic activity">
    <reaction evidence="1">
        <text>aldehydo-D-ribose 5-phosphate + D-glyceraldehyde 3-phosphate + L-glutamine = pyridoxal 5'-phosphate + L-glutamate + phosphate + 3 H2O + H(+)</text>
        <dbReference type="Rhea" id="RHEA:31507"/>
        <dbReference type="ChEBI" id="CHEBI:15377"/>
        <dbReference type="ChEBI" id="CHEBI:15378"/>
        <dbReference type="ChEBI" id="CHEBI:29985"/>
        <dbReference type="ChEBI" id="CHEBI:43474"/>
        <dbReference type="ChEBI" id="CHEBI:58273"/>
        <dbReference type="ChEBI" id="CHEBI:58359"/>
        <dbReference type="ChEBI" id="CHEBI:59776"/>
        <dbReference type="ChEBI" id="CHEBI:597326"/>
        <dbReference type="EC" id="4.3.3.6"/>
    </reaction>
</comment>
<comment type="pathway">
    <text evidence="1">Cofactor biosynthesis; pyridoxal 5'-phosphate biosynthesis.</text>
</comment>
<comment type="subunit">
    <text evidence="1 2">Homohexamer and homododecamer. In the presence of PdxT, forms a dodecamer of heterodimers.</text>
</comment>
<comment type="similarity">
    <text evidence="1">Belongs to the PdxS/SNZ family.</text>
</comment>
<dbReference type="EC" id="4.3.3.6" evidence="1"/>
<dbReference type="EMBL" id="BA000043">
    <property type="protein sequence ID" value="BAD74296.1"/>
    <property type="molecule type" value="Genomic_DNA"/>
</dbReference>
<dbReference type="RefSeq" id="WP_011229527.1">
    <property type="nucleotide sequence ID" value="NC_006510.1"/>
</dbReference>
<dbReference type="PDB" id="1ZNN">
    <property type="method" value="X-ray"/>
    <property type="resolution" value="2.20 A"/>
    <property type="chains" value="A/B/C/D/E/F=1-294"/>
</dbReference>
<dbReference type="PDB" id="4WXY">
    <property type="method" value="X-ray"/>
    <property type="resolution" value="2.70 A"/>
    <property type="chains" value="A/C/E/G/I/K=1-294"/>
</dbReference>
<dbReference type="PDB" id="4WXZ">
    <property type="method" value="X-ray"/>
    <property type="resolution" value="2.70 A"/>
    <property type="chains" value="A/B/C/D/E/F=1-294"/>
</dbReference>
<dbReference type="PDB" id="4WY0">
    <property type="method" value="X-ray"/>
    <property type="resolution" value="2.30 A"/>
    <property type="chains" value="A/B/C/D/E/F/G/H/I/J/K/L=1-294"/>
</dbReference>
<dbReference type="PDBsum" id="1ZNN"/>
<dbReference type="PDBsum" id="4WXY"/>
<dbReference type="PDBsum" id="4WXZ"/>
<dbReference type="PDBsum" id="4WY0"/>
<dbReference type="SMR" id="Q5L3Y2"/>
<dbReference type="STRING" id="235909.GK0011"/>
<dbReference type="GeneID" id="32065392"/>
<dbReference type="KEGG" id="gka:GK0011"/>
<dbReference type="eggNOG" id="COG0214">
    <property type="taxonomic scope" value="Bacteria"/>
</dbReference>
<dbReference type="HOGENOM" id="CLU_055352_1_0_9"/>
<dbReference type="BRENDA" id="4.3.3.6">
    <property type="organism ID" value="8138"/>
</dbReference>
<dbReference type="UniPathway" id="UPA00245"/>
<dbReference type="EvolutionaryTrace" id="Q5L3Y2"/>
<dbReference type="Proteomes" id="UP000001172">
    <property type="component" value="Chromosome"/>
</dbReference>
<dbReference type="GO" id="GO:0036381">
    <property type="term" value="F:pyridoxal 5'-phosphate synthase (glutamine hydrolysing) activity"/>
    <property type="evidence" value="ECO:0007669"/>
    <property type="project" value="UniProtKB-UniRule"/>
</dbReference>
<dbReference type="GO" id="GO:0006520">
    <property type="term" value="P:amino acid metabolic process"/>
    <property type="evidence" value="ECO:0007669"/>
    <property type="project" value="TreeGrafter"/>
</dbReference>
<dbReference type="GO" id="GO:0042823">
    <property type="term" value="P:pyridoxal phosphate biosynthetic process"/>
    <property type="evidence" value="ECO:0007669"/>
    <property type="project" value="UniProtKB-UniRule"/>
</dbReference>
<dbReference type="GO" id="GO:0008615">
    <property type="term" value="P:pyridoxine biosynthetic process"/>
    <property type="evidence" value="ECO:0007669"/>
    <property type="project" value="TreeGrafter"/>
</dbReference>
<dbReference type="CDD" id="cd04727">
    <property type="entry name" value="pdxS"/>
    <property type="match status" value="1"/>
</dbReference>
<dbReference type="FunFam" id="3.20.20.70:FF:000001">
    <property type="entry name" value="Pyridoxine biosynthesis protein PDX1"/>
    <property type="match status" value="1"/>
</dbReference>
<dbReference type="Gene3D" id="3.20.20.70">
    <property type="entry name" value="Aldolase class I"/>
    <property type="match status" value="1"/>
</dbReference>
<dbReference type="HAMAP" id="MF_01824">
    <property type="entry name" value="PdxS"/>
    <property type="match status" value="1"/>
</dbReference>
<dbReference type="InterPro" id="IPR013785">
    <property type="entry name" value="Aldolase_TIM"/>
</dbReference>
<dbReference type="InterPro" id="IPR001852">
    <property type="entry name" value="PdxS/SNZ"/>
</dbReference>
<dbReference type="InterPro" id="IPR033755">
    <property type="entry name" value="PdxS/SNZ_N"/>
</dbReference>
<dbReference type="InterPro" id="IPR011060">
    <property type="entry name" value="RibuloseP-bd_barrel"/>
</dbReference>
<dbReference type="NCBIfam" id="NF003215">
    <property type="entry name" value="PRK04180.1"/>
    <property type="match status" value="1"/>
</dbReference>
<dbReference type="NCBIfam" id="TIGR00343">
    <property type="entry name" value="pyridoxal 5'-phosphate synthase lyase subunit PdxS"/>
    <property type="match status" value="1"/>
</dbReference>
<dbReference type="PANTHER" id="PTHR31829">
    <property type="entry name" value="PYRIDOXAL 5'-PHOSPHATE SYNTHASE SUBUNIT SNZ1-RELATED"/>
    <property type="match status" value="1"/>
</dbReference>
<dbReference type="PANTHER" id="PTHR31829:SF0">
    <property type="entry name" value="PYRIDOXAL 5'-PHOSPHATE SYNTHASE SUBUNIT SNZ1-RELATED"/>
    <property type="match status" value="1"/>
</dbReference>
<dbReference type="Pfam" id="PF01680">
    <property type="entry name" value="SOR_SNZ"/>
    <property type="match status" value="1"/>
</dbReference>
<dbReference type="PIRSF" id="PIRSF029271">
    <property type="entry name" value="Pdx1"/>
    <property type="match status" value="1"/>
</dbReference>
<dbReference type="SUPFAM" id="SSF51366">
    <property type="entry name" value="Ribulose-phoshate binding barrel"/>
    <property type="match status" value="1"/>
</dbReference>
<dbReference type="PROSITE" id="PS01235">
    <property type="entry name" value="PDXS_SNZ_1"/>
    <property type="match status" value="1"/>
</dbReference>
<dbReference type="PROSITE" id="PS51129">
    <property type="entry name" value="PDXS_SNZ_2"/>
    <property type="match status" value="1"/>
</dbReference>
<reference key="1">
    <citation type="journal article" date="2004" name="Nucleic Acids Res.">
        <title>Thermoadaptation trait revealed by the genome sequence of thermophilic Geobacillus kaustophilus.</title>
        <authorList>
            <person name="Takami H."/>
            <person name="Takaki Y."/>
            <person name="Chee G.-J."/>
            <person name="Nishi S."/>
            <person name="Shimamura S."/>
            <person name="Suzuki H."/>
            <person name="Matsui S."/>
            <person name="Uchiyama I."/>
        </authorList>
    </citation>
    <scope>NUCLEOTIDE SEQUENCE [LARGE SCALE GENOMIC DNA]</scope>
    <source>
        <strain>HTA426</strain>
    </source>
</reference>
<reference key="2">
    <citation type="journal article" date="2005" name="J. Biol. Chem.">
        <title>A new arrangement of (beta/alpha)8 barrels in the synthase subunit of PLP synthase.</title>
        <authorList>
            <person name="Zhu J."/>
            <person name="Burgner J.W."/>
            <person name="Harms E."/>
            <person name="Belitsky B.R."/>
            <person name="Smith J.L."/>
        </authorList>
    </citation>
    <scope>X-RAY CRYSTALLOGRAPHY (2.20 ANGSTROMS) IN COMPLEX WITH SUBSTRATE ANALOG</scope>
    <scope>SUBUNIT</scope>
</reference>
<keyword id="KW-0002">3D-structure</keyword>
<keyword id="KW-0456">Lyase</keyword>
<keyword id="KW-0663">Pyridoxal phosphate</keyword>
<keyword id="KW-1185">Reference proteome</keyword>
<keyword id="KW-0704">Schiff base</keyword>
<accession>Q5L3Y2</accession>
<evidence type="ECO:0000255" key="1">
    <source>
        <dbReference type="HAMAP-Rule" id="MF_01824"/>
    </source>
</evidence>
<evidence type="ECO:0000269" key="2">
    <source>
    </source>
</evidence>
<evidence type="ECO:0000305" key="3">
    <source>
    </source>
</evidence>
<evidence type="ECO:0007829" key="4">
    <source>
        <dbReference type="PDB" id="1ZNN"/>
    </source>
</evidence>
<evidence type="ECO:0007829" key="5">
    <source>
        <dbReference type="PDB" id="4WXY"/>
    </source>
</evidence>
<evidence type="ECO:0007829" key="6">
    <source>
        <dbReference type="PDB" id="4WY0"/>
    </source>
</evidence>
<protein>
    <recommendedName>
        <fullName evidence="1">Pyridoxal 5'-phosphate synthase subunit PdxS</fullName>
        <shortName evidence="1">PLP synthase subunit PdxS</shortName>
        <ecNumber evidence="1">4.3.3.6</ecNumber>
    </recommendedName>
    <alternativeName>
        <fullName evidence="1">Pdx1</fullName>
    </alternativeName>
</protein>
<feature type="chain" id="PRO_0000109395" description="Pyridoxal 5'-phosphate synthase subunit PdxS">
    <location>
        <begin position="1"/>
        <end position="294"/>
    </location>
</feature>
<feature type="active site" description="Schiff-base intermediate with D-ribose 5-phosphate" evidence="1 3">
    <location>
        <position position="81"/>
    </location>
</feature>
<feature type="binding site" evidence="1 3">
    <location>
        <position position="24"/>
    </location>
    <ligand>
        <name>D-ribose 5-phosphate</name>
        <dbReference type="ChEBI" id="CHEBI:78346"/>
    </ligand>
</feature>
<feature type="binding site" evidence="1">
    <location>
        <position position="153"/>
    </location>
    <ligand>
        <name>D-ribose 5-phosphate</name>
        <dbReference type="ChEBI" id="CHEBI:78346"/>
    </ligand>
</feature>
<feature type="binding site" evidence="1">
    <location>
        <position position="165"/>
    </location>
    <ligand>
        <name>D-glyceraldehyde 3-phosphate</name>
        <dbReference type="ChEBI" id="CHEBI:59776"/>
    </ligand>
</feature>
<feature type="binding site" evidence="1">
    <location>
        <position position="214"/>
    </location>
    <ligand>
        <name>D-ribose 5-phosphate</name>
        <dbReference type="ChEBI" id="CHEBI:78346"/>
    </ligand>
</feature>
<feature type="binding site" evidence="1">
    <location>
        <begin position="235"/>
        <end position="236"/>
    </location>
    <ligand>
        <name>D-ribose 5-phosphate</name>
        <dbReference type="ChEBI" id="CHEBI:78346"/>
    </ligand>
</feature>
<feature type="helix" evidence="6">
    <location>
        <begin position="7"/>
        <end position="14"/>
    </location>
</feature>
<feature type="turn" evidence="6">
    <location>
        <begin position="16"/>
        <end position="19"/>
    </location>
</feature>
<feature type="strand" evidence="4">
    <location>
        <begin position="20"/>
        <end position="27"/>
    </location>
</feature>
<feature type="helix" evidence="4">
    <location>
        <begin position="28"/>
        <end position="37"/>
    </location>
</feature>
<feature type="strand" evidence="4">
    <location>
        <begin position="40"/>
        <end position="44"/>
    </location>
</feature>
<feature type="helix" evidence="5">
    <location>
        <begin position="49"/>
        <end position="55"/>
    </location>
</feature>
<feature type="helix" evidence="4">
    <location>
        <begin position="64"/>
        <end position="73"/>
    </location>
</feature>
<feature type="strand" evidence="4">
    <location>
        <begin position="78"/>
        <end position="83"/>
    </location>
</feature>
<feature type="helix" evidence="4">
    <location>
        <begin position="87"/>
        <end position="96"/>
    </location>
</feature>
<feature type="strand" evidence="4">
    <location>
        <begin position="99"/>
        <end position="104"/>
    </location>
</feature>
<feature type="helix" evidence="4">
    <location>
        <begin position="118"/>
        <end position="120"/>
    </location>
</feature>
<feature type="strand" evidence="4">
    <location>
        <begin position="125"/>
        <end position="131"/>
    </location>
</feature>
<feature type="helix" evidence="4">
    <location>
        <begin position="132"/>
        <end position="140"/>
    </location>
</feature>
<feature type="strand" evidence="4">
    <location>
        <begin position="144"/>
        <end position="148"/>
    </location>
</feature>
<feature type="strand" evidence="6">
    <location>
        <begin position="151"/>
        <end position="154"/>
    </location>
</feature>
<feature type="helix" evidence="4">
    <location>
        <begin position="158"/>
        <end position="176"/>
    </location>
</feature>
<feature type="helix" evidence="4">
    <location>
        <begin position="179"/>
        <end position="181"/>
    </location>
</feature>
<feature type="helix" evidence="4">
    <location>
        <begin position="182"/>
        <end position="189"/>
    </location>
</feature>
<feature type="helix" evidence="4">
    <location>
        <begin position="193"/>
        <end position="202"/>
    </location>
</feature>
<feature type="strand" evidence="4">
    <location>
        <begin position="206"/>
        <end position="214"/>
    </location>
</feature>
<feature type="helix" evidence="4">
    <location>
        <begin position="218"/>
        <end position="226"/>
    </location>
</feature>
<feature type="strand" evidence="4">
    <location>
        <begin position="230"/>
        <end position="234"/>
    </location>
</feature>
<feature type="helix" evidence="4">
    <location>
        <begin position="236"/>
        <end position="240"/>
    </location>
</feature>
<feature type="helix" evidence="4">
    <location>
        <begin position="244"/>
        <end position="256"/>
    </location>
</feature>
<feature type="turn" evidence="4">
    <location>
        <begin position="257"/>
        <end position="259"/>
    </location>
</feature>
<feature type="helix" evidence="4">
    <location>
        <begin position="261"/>
        <end position="267"/>
    </location>
</feature>
<feature type="turn" evidence="4">
    <location>
        <begin position="268"/>
        <end position="270"/>
    </location>
</feature>
<name>PDXS_GEOKA</name>
<proteinExistence type="evidence at protein level"/>